<accession>Q1XDD3</accession>
<proteinExistence type="inferred from homology"/>
<protein>
    <recommendedName>
        <fullName>Uracil phosphoribosyltransferase homolog</fullName>
    </recommendedName>
</protein>
<keyword id="KW-0150">Chloroplast</keyword>
<keyword id="KW-0934">Plastid</keyword>
<name>UPPH_PYRYE</name>
<geneLocation type="chloroplast"/>
<evidence type="ECO:0000305" key="1"/>
<feature type="chain" id="PRO_0000277383" description="Uracil phosphoribosyltransferase homolog">
    <location>
        <begin position="1"/>
        <end position="198"/>
    </location>
</feature>
<reference key="1">
    <citation type="submission" date="2003-11" db="EMBL/GenBank/DDBJ databases">
        <title>Whole genome sequence of Porphyra yezoensis chloroplast.</title>
        <authorList>
            <person name="Kunimoto M."/>
            <person name="Morishima K."/>
            <person name="Yoshikawa M."/>
            <person name="Fukuda S."/>
            <person name="Kobayashi T."/>
            <person name="Kobayashi M."/>
            <person name="Okazaki T."/>
            <person name="Ohara I."/>
            <person name="Nakayama I."/>
        </authorList>
    </citation>
    <scope>NUCLEOTIDE SEQUENCE [LARGE SCALE GENOMIC DNA]</scope>
    <source>
        <strain>U-51</strain>
    </source>
</reference>
<dbReference type="EMBL" id="AP006715">
    <property type="protein sequence ID" value="BAE92478.1"/>
    <property type="molecule type" value="Genomic_DNA"/>
</dbReference>
<dbReference type="RefSeq" id="YP_537035.1">
    <property type="nucleotide sequence ID" value="NC_007932.1"/>
</dbReference>
<dbReference type="SMR" id="Q1XDD3"/>
<dbReference type="GeneID" id="3978868"/>
<dbReference type="GO" id="GO:0009507">
    <property type="term" value="C:chloroplast"/>
    <property type="evidence" value="ECO:0007669"/>
    <property type="project" value="UniProtKB-SubCell"/>
</dbReference>
<dbReference type="Gene3D" id="3.40.50.2020">
    <property type="match status" value="1"/>
</dbReference>
<dbReference type="InterPro" id="IPR000836">
    <property type="entry name" value="PRibTrfase_dom"/>
</dbReference>
<dbReference type="InterPro" id="IPR029057">
    <property type="entry name" value="PRTase-like"/>
</dbReference>
<dbReference type="Pfam" id="PF14681">
    <property type="entry name" value="UPRTase"/>
    <property type="match status" value="1"/>
</dbReference>
<dbReference type="SUPFAM" id="SSF53271">
    <property type="entry name" value="PRTase-like"/>
    <property type="match status" value="1"/>
</dbReference>
<sequence length="198" mass="22479">MQLQINIASHPLIQHWSGILKNDNNPGTILRTACSELGKWITYEIMREWLVTETIELKANTTISLISSHYKYIIVIIMPYGFILAEGARSLLPTANIVLVNYNDIINNVPDQLNSFTKILVLDLFLDEATITPLLNDFIKKGAVLSNIKIACLECGTSQLNQLGQIWSKLEIYTTKVNTNVDKEKCSREDDFKDKFFV</sequence>
<organism>
    <name type="scientific">Pyropia yezoensis</name>
    <name type="common">Susabi-nori</name>
    <name type="synonym">Porphyra yezoensis</name>
    <dbReference type="NCBI Taxonomy" id="2788"/>
    <lineage>
        <taxon>Eukaryota</taxon>
        <taxon>Rhodophyta</taxon>
        <taxon>Bangiophyceae</taxon>
        <taxon>Bangiales</taxon>
        <taxon>Bangiaceae</taxon>
        <taxon>Pyropia</taxon>
    </lineage>
</organism>
<comment type="subcellular location">
    <subcellularLocation>
        <location>Plastid</location>
        <location>Chloroplast</location>
    </subcellularLocation>
</comment>
<comment type="similarity">
    <text evidence="1">Belongs to the UPRTase family.</text>
</comment>